<name>MNME_ECO57</name>
<keyword id="KW-0963">Cytoplasm</keyword>
<keyword id="KW-0342">GTP-binding</keyword>
<keyword id="KW-0378">Hydrolase</keyword>
<keyword id="KW-0460">Magnesium</keyword>
<keyword id="KW-0479">Metal-binding</keyword>
<keyword id="KW-0547">Nucleotide-binding</keyword>
<keyword id="KW-0630">Potassium</keyword>
<keyword id="KW-1185">Reference proteome</keyword>
<keyword id="KW-0819">tRNA processing</keyword>
<proteinExistence type="inferred from homology"/>
<protein>
    <recommendedName>
        <fullName evidence="1">tRNA modification GTPase MnmE</fullName>
        <ecNumber evidence="1">3.6.-.-</ecNumber>
    </recommendedName>
</protein>
<dbReference type="EC" id="3.6.-.-" evidence="1"/>
<dbReference type="EMBL" id="AE005174">
    <property type="protein sequence ID" value="AAG58903.1"/>
    <property type="molecule type" value="Genomic_DNA"/>
</dbReference>
<dbReference type="EMBL" id="BA000007">
    <property type="protein sequence ID" value="BAB38064.1"/>
    <property type="molecule type" value="Genomic_DNA"/>
</dbReference>
<dbReference type="PIR" id="A98209">
    <property type="entry name" value="A98209"/>
</dbReference>
<dbReference type="PIR" id="C86055">
    <property type="entry name" value="C86055"/>
</dbReference>
<dbReference type="RefSeq" id="NP_312668.1">
    <property type="nucleotide sequence ID" value="NC_002695.1"/>
</dbReference>
<dbReference type="RefSeq" id="WP_001282345.1">
    <property type="nucleotide sequence ID" value="NZ_SWKA01000005.1"/>
</dbReference>
<dbReference type="SMR" id="Q8XB41"/>
<dbReference type="STRING" id="155864.Z5198"/>
<dbReference type="GeneID" id="915398"/>
<dbReference type="KEGG" id="ece:Z5198"/>
<dbReference type="KEGG" id="ecs:ECs_4641"/>
<dbReference type="PATRIC" id="fig|386585.9.peg.4851"/>
<dbReference type="eggNOG" id="COG0486">
    <property type="taxonomic scope" value="Bacteria"/>
</dbReference>
<dbReference type="HOGENOM" id="CLU_019624_4_1_6"/>
<dbReference type="OMA" id="EFHCHGG"/>
<dbReference type="Proteomes" id="UP000000558">
    <property type="component" value="Chromosome"/>
</dbReference>
<dbReference type="Proteomes" id="UP000002519">
    <property type="component" value="Chromosome"/>
</dbReference>
<dbReference type="GO" id="GO:0005829">
    <property type="term" value="C:cytosol"/>
    <property type="evidence" value="ECO:0007669"/>
    <property type="project" value="TreeGrafter"/>
</dbReference>
<dbReference type="GO" id="GO:0005525">
    <property type="term" value="F:GTP binding"/>
    <property type="evidence" value="ECO:0007669"/>
    <property type="project" value="UniProtKB-UniRule"/>
</dbReference>
<dbReference type="GO" id="GO:0003924">
    <property type="term" value="F:GTPase activity"/>
    <property type="evidence" value="ECO:0007669"/>
    <property type="project" value="UniProtKB-UniRule"/>
</dbReference>
<dbReference type="GO" id="GO:0046872">
    <property type="term" value="F:metal ion binding"/>
    <property type="evidence" value="ECO:0007669"/>
    <property type="project" value="UniProtKB-KW"/>
</dbReference>
<dbReference type="GO" id="GO:0030488">
    <property type="term" value="P:tRNA methylation"/>
    <property type="evidence" value="ECO:0007669"/>
    <property type="project" value="TreeGrafter"/>
</dbReference>
<dbReference type="GO" id="GO:0002098">
    <property type="term" value="P:tRNA wobble uridine modification"/>
    <property type="evidence" value="ECO:0007669"/>
    <property type="project" value="TreeGrafter"/>
</dbReference>
<dbReference type="CDD" id="cd04164">
    <property type="entry name" value="trmE"/>
    <property type="match status" value="1"/>
</dbReference>
<dbReference type="CDD" id="cd14858">
    <property type="entry name" value="TrmE_N"/>
    <property type="match status" value="1"/>
</dbReference>
<dbReference type="FunFam" id="3.30.1360.120:FF:000001">
    <property type="entry name" value="tRNA modification GTPase MnmE"/>
    <property type="match status" value="1"/>
</dbReference>
<dbReference type="FunFam" id="3.40.50.300:FF:000249">
    <property type="entry name" value="tRNA modification GTPase MnmE"/>
    <property type="match status" value="1"/>
</dbReference>
<dbReference type="Gene3D" id="3.40.50.300">
    <property type="entry name" value="P-loop containing nucleotide triphosphate hydrolases"/>
    <property type="match status" value="1"/>
</dbReference>
<dbReference type="Gene3D" id="3.30.1360.120">
    <property type="entry name" value="Probable tRNA modification gtpase trme, domain 1"/>
    <property type="match status" value="1"/>
</dbReference>
<dbReference type="Gene3D" id="1.20.120.430">
    <property type="entry name" value="tRNA modification GTPase MnmE domain 2"/>
    <property type="match status" value="1"/>
</dbReference>
<dbReference type="HAMAP" id="MF_00379">
    <property type="entry name" value="GTPase_MnmE"/>
    <property type="match status" value="1"/>
</dbReference>
<dbReference type="InterPro" id="IPR031168">
    <property type="entry name" value="G_TrmE"/>
</dbReference>
<dbReference type="InterPro" id="IPR006073">
    <property type="entry name" value="GTP-bd"/>
</dbReference>
<dbReference type="InterPro" id="IPR018948">
    <property type="entry name" value="GTP-bd_TrmE_N"/>
</dbReference>
<dbReference type="InterPro" id="IPR004520">
    <property type="entry name" value="GTPase_MnmE"/>
</dbReference>
<dbReference type="InterPro" id="IPR027368">
    <property type="entry name" value="MnmE_dom2"/>
</dbReference>
<dbReference type="InterPro" id="IPR025867">
    <property type="entry name" value="MnmE_helical"/>
</dbReference>
<dbReference type="InterPro" id="IPR027417">
    <property type="entry name" value="P-loop_NTPase"/>
</dbReference>
<dbReference type="InterPro" id="IPR005225">
    <property type="entry name" value="Small_GTP-bd"/>
</dbReference>
<dbReference type="InterPro" id="IPR027266">
    <property type="entry name" value="TrmE/GcvT_dom1"/>
</dbReference>
<dbReference type="NCBIfam" id="TIGR00450">
    <property type="entry name" value="mnmE_trmE_thdF"/>
    <property type="match status" value="1"/>
</dbReference>
<dbReference type="NCBIfam" id="NF003661">
    <property type="entry name" value="PRK05291.1-3"/>
    <property type="match status" value="1"/>
</dbReference>
<dbReference type="NCBIfam" id="TIGR00231">
    <property type="entry name" value="small_GTP"/>
    <property type="match status" value="1"/>
</dbReference>
<dbReference type="PANTHER" id="PTHR42714">
    <property type="entry name" value="TRNA MODIFICATION GTPASE GTPBP3"/>
    <property type="match status" value="1"/>
</dbReference>
<dbReference type="PANTHER" id="PTHR42714:SF2">
    <property type="entry name" value="TRNA MODIFICATION GTPASE GTPBP3, MITOCHONDRIAL"/>
    <property type="match status" value="1"/>
</dbReference>
<dbReference type="Pfam" id="PF01926">
    <property type="entry name" value="MMR_HSR1"/>
    <property type="match status" value="1"/>
</dbReference>
<dbReference type="Pfam" id="PF12631">
    <property type="entry name" value="MnmE_helical"/>
    <property type="match status" value="1"/>
</dbReference>
<dbReference type="Pfam" id="PF10396">
    <property type="entry name" value="TrmE_N"/>
    <property type="match status" value="1"/>
</dbReference>
<dbReference type="SUPFAM" id="SSF52540">
    <property type="entry name" value="P-loop containing nucleoside triphosphate hydrolases"/>
    <property type="match status" value="1"/>
</dbReference>
<dbReference type="SUPFAM" id="SSF116878">
    <property type="entry name" value="TrmE connector domain"/>
    <property type="match status" value="1"/>
</dbReference>
<dbReference type="PROSITE" id="PS51709">
    <property type="entry name" value="G_TRME"/>
    <property type="match status" value="1"/>
</dbReference>
<sequence>MSDNDTIVAQATPPGRGGVGILRISGFKAREVAETVLGKLPKPRYADYLPFKDADGSVLDQGIALWFPGPNSFTGEDVLELQGHGGPVILDLLLKRILTIPGLRIARPGEFSERAFLNDKLDLAQAEAIADLIDASSEQAARSALNSLQGAFSARVNHLVEALTHLRIYVEAAIDFPDEEIDFLSDGKIEAQLNDVIADLDAVRAEARQGSLLREGMKVVIAGRPNAGKSSLLNALAGREAAIVTDIAGTTRDVLREHIHIDGMPLHIIDTAGLREASDEVERIGIERAWQEIEQADRVLFMVDGTTTDAVDPAEIWPEFIARLPAKLPITVVRNKADITGETLGMSEVNGHALIRLSAKTGEGVDVLRNHLKQSMGFDTNMEGGFLARRRHLQALEQAAEHLQQGKAQLLGAWAGELLAEELRLAQQNLSEITGEFTSDDLLGRIFSSFCIGK</sequence>
<comment type="function">
    <text evidence="1">Exhibits a very high intrinsic GTPase hydrolysis rate. Involved in the addition of a carboxymethylaminomethyl (cmnm) group at the wobble position (U34) of certain tRNAs, forming tRNA-cmnm(5)s(2)U34.</text>
</comment>
<comment type="cofactor">
    <cofactor evidence="1">
        <name>K(+)</name>
        <dbReference type="ChEBI" id="CHEBI:29103"/>
    </cofactor>
    <text evidence="1">Binds 1 potassium ion per subunit.</text>
</comment>
<comment type="subunit">
    <text evidence="1">Homodimer. Heterotetramer of two MnmE and two MnmG subunits.</text>
</comment>
<comment type="subcellular location">
    <subcellularLocation>
        <location>Cytoplasm</location>
    </subcellularLocation>
</comment>
<comment type="similarity">
    <text evidence="1">Belongs to the TRAFAC class TrmE-Era-EngA-EngB-Septin-like GTPase superfamily. TrmE GTPase family.</text>
</comment>
<reference key="1">
    <citation type="journal article" date="2001" name="Nature">
        <title>Genome sequence of enterohaemorrhagic Escherichia coli O157:H7.</title>
        <authorList>
            <person name="Perna N.T."/>
            <person name="Plunkett G. III"/>
            <person name="Burland V."/>
            <person name="Mau B."/>
            <person name="Glasner J.D."/>
            <person name="Rose D.J."/>
            <person name="Mayhew G.F."/>
            <person name="Evans P.S."/>
            <person name="Gregor J."/>
            <person name="Kirkpatrick H.A."/>
            <person name="Posfai G."/>
            <person name="Hackett J."/>
            <person name="Klink S."/>
            <person name="Boutin A."/>
            <person name="Shao Y."/>
            <person name="Miller L."/>
            <person name="Grotbeck E.J."/>
            <person name="Davis N.W."/>
            <person name="Lim A."/>
            <person name="Dimalanta E.T."/>
            <person name="Potamousis K."/>
            <person name="Apodaca J."/>
            <person name="Anantharaman T.S."/>
            <person name="Lin J."/>
            <person name="Yen G."/>
            <person name="Schwartz D.C."/>
            <person name="Welch R.A."/>
            <person name="Blattner F.R."/>
        </authorList>
    </citation>
    <scope>NUCLEOTIDE SEQUENCE [LARGE SCALE GENOMIC DNA]</scope>
    <source>
        <strain>O157:H7 / EDL933 / ATCC 700927 / EHEC</strain>
    </source>
</reference>
<reference key="2">
    <citation type="journal article" date="2001" name="DNA Res.">
        <title>Complete genome sequence of enterohemorrhagic Escherichia coli O157:H7 and genomic comparison with a laboratory strain K-12.</title>
        <authorList>
            <person name="Hayashi T."/>
            <person name="Makino K."/>
            <person name="Ohnishi M."/>
            <person name="Kurokawa K."/>
            <person name="Ishii K."/>
            <person name="Yokoyama K."/>
            <person name="Han C.-G."/>
            <person name="Ohtsubo E."/>
            <person name="Nakayama K."/>
            <person name="Murata T."/>
            <person name="Tanaka M."/>
            <person name="Tobe T."/>
            <person name="Iida T."/>
            <person name="Takami H."/>
            <person name="Honda T."/>
            <person name="Sasakawa C."/>
            <person name="Ogasawara N."/>
            <person name="Yasunaga T."/>
            <person name="Kuhara S."/>
            <person name="Shiba T."/>
            <person name="Hattori M."/>
            <person name="Shinagawa H."/>
        </authorList>
    </citation>
    <scope>NUCLEOTIDE SEQUENCE [LARGE SCALE GENOMIC DNA]</scope>
    <source>
        <strain>O157:H7 / Sakai / RIMD 0509952 / EHEC</strain>
    </source>
</reference>
<feature type="chain" id="PRO_0000188876" description="tRNA modification GTPase MnmE">
    <location>
        <begin position="1"/>
        <end position="454"/>
    </location>
</feature>
<feature type="domain" description="TrmE-type G">
    <location>
        <begin position="216"/>
        <end position="377"/>
    </location>
</feature>
<feature type="binding site" evidence="1">
    <location>
        <position position="23"/>
    </location>
    <ligand>
        <name>(6S)-5-formyl-5,6,7,8-tetrahydrofolate</name>
        <dbReference type="ChEBI" id="CHEBI:57457"/>
    </ligand>
</feature>
<feature type="binding site" evidence="1">
    <location>
        <position position="80"/>
    </location>
    <ligand>
        <name>(6S)-5-formyl-5,6,7,8-tetrahydrofolate</name>
        <dbReference type="ChEBI" id="CHEBI:57457"/>
    </ligand>
</feature>
<feature type="binding site" evidence="1">
    <location>
        <position position="120"/>
    </location>
    <ligand>
        <name>(6S)-5-formyl-5,6,7,8-tetrahydrofolate</name>
        <dbReference type="ChEBI" id="CHEBI:57457"/>
    </ligand>
</feature>
<feature type="binding site" evidence="1">
    <location>
        <begin position="226"/>
        <end position="231"/>
    </location>
    <ligand>
        <name>GTP</name>
        <dbReference type="ChEBI" id="CHEBI:37565"/>
    </ligand>
</feature>
<feature type="binding site" evidence="1">
    <location>
        <position position="226"/>
    </location>
    <ligand>
        <name>K(+)</name>
        <dbReference type="ChEBI" id="CHEBI:29103"/>
    </ligand>
</feature>
<feature type="binding site" evidence="1">
    <location>
        <position position="230"/>
    </location>
    <ligand>
        <name>Mg(2+)</name>
        <dbReference type="ChEBI" id="CHEBI:18420"/>
    </ligand>
</feature>
<feature type="binding site" evidence="1">
    <location>
        <begin position="245"/>
        <end position="251"/>
    </location>
    <ligand>
        <name>GTP</name>
        <dbReference type="ChEBI" id="CHEBI:37565"/>
    </ligand>
</feature>
<feature type="binding site" evidence="1">
    <location>
        <position position="245"/>
    </location>
    <ligand>
        <name>K(+)</name>
        <dbReference type="ChEBI" id="CHEBI:29103"/>
    </ligand>
</feature>
<feature type="binding site" evidence="1">
    <location>
        <position position="247"/>
    </location>
    <ligand>
        <name>K(+)</name>
        <dbReference type="ChEBI" id="CHEBI:29103"/>
    </ligand>
</feature>
<feature type="binding site" evidence="1">
    <location>
        <position position="250"/>
    </location>
    <ligand>
        <name>K(+)</name>
        <dbReference type="ChEBI" id="CHEBI:29103"/>
    </ligand>
</feature>
<feature type="binding site" evidence="1">
    <location>
        <position position="251"/>
    </location>
    <ligand>
        <name>Mg(2+)</name>
        <dbReference type="ChEBI" id="CHEBI:18420"/>
    </ligand>
</feature>
<feature type="binding site" evidence="1">
    <location>
        <begin position="270"/>
        <end position="273"/>
    </location>
    <ligand>
        <name>GTP</name>
        <dbReference type="ChEBI" id="CHEBI:37565"/>
    </ligand>
</feature>
<feature type="binding site" evidence="1">
    <location>
        <begin position="335"/>
        <end position="338"/>
    </location>
    <ligand>
        <name>GTP</name>
        <dbReference type="ChEBI" id="CHEBI:37565"/>
    </ligand>
</feature>
<feature type="binding site" evidence="1">
    <location>
        <position position="454"/>
    </location>
    <ligand>
        <name>(6S)-5-formyl-5,6,7,8-tetrahydrofolate</name>
        <dbReference type="ChEBI" id="CHEBI:57457"/>
    </ligand>
</feature>
<evidence type="ECO:0000255" key="1">
    <source>
        <dbReference type="HAMAP-Rule" id="MF_00379"/>
    </source>
</evidence>
<organism>
    <name type="scientific">Escherichia coli O157:H7</name>
    <dbReference type="NCBI Taxonomy" id="83334"/>
    <lineage>
        <taxon>Bacteria</taxon>
        <taxon>Pseudomonadati</taxon>
        <taxon>Pseudomonadota</taxon>
        <taxon>Gammaproteobacteria</taxon>
        <taxon>Enterobacterales</taxon>
        <taxon>Enterobacteriaceae</taxon>
        <taxon>Escherichia</taxon>
    </lineage>
</organism>
<accession>Q8XB41</accession>
<gene>
    <name evidence="1" type="primary">mnmE</name>
    <name evidence="1" type="synonym">thdF</name>
    <name evidence="1" type="synonym">trmE</name>
    <name type="ordered locus">Z5198</name>
    <name type="ordered locus">ECs4641</name>
</gene>